<gene>
    <name type="ORF">DDB_G0278987</name>
</gene>
<accession>Q54XG0</accession>
<proteinExistence type="predicted"/>
<sequence>MSSDEGETPKMGFGHAMLLKMGWKGKGLGVEEDGRTEIIVNKKKQDKVGVGASISDRVSTSNNWESTNEAYDHILAKLNGVDEITWKKKNNKFVKEEKITFKRTIKKNSKKNKDESDSDSDSDSESESDKKPTKKQKVQSDSDSSCSDSSSSSSSSSSESEKEDKSSSNTTSDESDKESSSDSSDSSESENEKKDKKKIVNNKKGKDSDSSSSSDDSCSSESDSSSSSSSSSSSSDSSSESDSDNKNKNKNKNKNKKSKESDSSSSSSSSESEEEEKKEVAKKSFSVSKTRYQRLLRAKSVKNYSEDDLREILGYRPNQDTRKLKTKE</sequence>
<reference key="1">
    <citation type="journal article" date="2005" name="Nature">
        <title>The genome of the social amoeba Dictyostelium discoideum.</title>
        <authorList>
            <person name="Eichinger L."/>
            <person name="Pachebat J.A."/>
            <person name="Gloeckner G."/>
            <person name="Rajandream M.A."/>
            <person name="Sucgang R."/>
            <person name="Berriman M."/>
            <person name="Song J."/>
            <person name="Olsen R."/>
            <person name="Szafranski K."/>
            <person name="Xu Q."/>
            <person name="Tunggal B."/>
            <person name="Kummerfeld S."/>
            <person name="Madera M."/>
            <person name="Konfortov B.A."/>
            <person name="Rivero F."/>
            <person name="Bankier A.T."/>
            <person name="Lehmann R."/>
            <person name="Hamlin N."/>
            <person name="Davies R."/>
            <person name="Gaudet P."/>
            <person name="Fey P."/>
            <person name="Pilcher K."/>
            <person name="Chen G."/>
            <person name="Saunders D."/>
            <person name="Sodergren E.J."/>
            <person name="Davis P."/>
            <person name="Kerhornou A."/>
            <person name="Nie X."/>
            <person name="Hall N."/>
            <person name="Anjard C."/>
            <person name="Hemphill L."/>
            <person name="Bason N."/>
            <person name="Farbrother P."/>
            <person name="Desany B."/>
            <person name="Just E."/>
            <person name="Morio T."/>
            <person name="Rost R."/>
            <person name="Churcher C.M."/>
            <person name="Cooper J."/>
            <person name="Haydock S."/>
            <person name="van Driessche N."/>
            <person name="Cronin A."/>
            <person name="Goodhead I."/>
            <person name="Muzny D.M."/>
            <person name="Mourier T."/>
            <person name="Pain A."/>
            <person name="Lu M."/>
            <person name="Harper D."/>
            <person name="Lindsay R."/>
            <person name="Hauser H."/>
            <person name="James K.D."/>
            <person name="Quiles M."/>
            <person name="Madan Babu M."/>
            <person name="Saito T."/>
            <person name="Buchrieser C."/>
            <person name="Wardroper A."/>
            <person name="Felder M."/>
            <person name="Thangavelu M."/>
            <person name="Johnson D."/>
            <person name="Knights A."/>
            <person name="Loulseged H."/>
            <person name="Mungall K.L."/>
            <person name="Oliver K."/>
            <person name="Price C."/>
            <person name="Quail M.A."/>
            <person name="Urushihara H."/>
            <person name="Hernandez J."/>
            <person name="Rabbinowitsch E."/>
            <person name="Steffen D."/>
            <person name="Sanders M."/>
            <person name="Ma J."/>
            <person name="Kohara Y."/>
            <person name="Sharp S."/>
            <person name="Simmonds M.N."/>
            <person name="Spiegler S."/>
            <person name="Tivey A."/>
            <person name="Sugano S."/>
            <person name="White B."/>
            <person name="Walker D."/>
            <person name="Woodward J.R."/>
            <person name="Winckler T."/>
            <person name="Tanaka Y."/>
            <person name="Shaulsky G."/>
            <person name="Schleicher M."/>
            <person name="Weinstock G.M."/>
            <person name="Rosenthal A."/>
            <person name="Cox E.C."/>
            <person name="Chisholm R.L."/>
            <person name="Gibbs R.A."/>
            <person name="Loomis W.F."/>
            <person name="Platzer M."/>
            <person name="Kay R.R."/>
            <person name="Williams J.G."/>
            <person name="Dear P.H."/>
            <person name="Noegel A.A."/>
            <person name="Barrell B.G."/>
            <person name="Kuspa A."/>
        </authorList>
    </citation>
    <scope>NUCLEOTIDE SEQUENCE [LARGE SCALE GENOMIC DNA]</scope>
    <source>
        <strain>AX4</strain>
    </source>
</reference>
<protein>
    <recommendedName>
        <fullName>Uncharacterized G-patch domain protein DDB_G0278987</fullName>
    </recommendedName>
</protein>
<keyword id="KW-1185">Reference proteome</keyword>
<dbReference type="EMBL" id="AAFI02000026">
    <property type="protein sequence ID" value="EAL67915.1"/>
    <property type="molecule type" value="Genomic_DNA"/>
</dbReference>
<dbReference type="RefSeq" id="XP_641890.1">
    <property type="nucleotide sequence ID" value="XM_636798.1"/>
</dbReference>
<dbReference type="SMR" id="Q54XG0"/>
<dbReference type="FunCoup" id="Q54XG0">
    <property type="interactions" value="312"/>
</dbReference>
<dbReference type="STRING" id="44689.Q54XG0"/>
<dbReference type="PaxDb" id="44689-DDB0215282"/>
<dbReference type="EnsemblProtists" id="EAL67915">
    <property type="protein sequence ID" value="EAL67915"/>
    <property type="gene ID" value="DDB_G0278987"/>
</dbReference>
<dbReference type="GeneID" id="8621816"/>
<dbReference type="KEGG" id="ddi:DDB_G0278987"/>
<dbReference type="dictyBase" id="DDB_G0278987"/>
<dbReference type="VEuPathDB" id="AmoebaDB:DDB_G0278987"/>
<dbReference type="eggNOG" id="KOG2809">
    <property type="taxonomic scope" value="Eukaryota"/>
</dbReference>
<dbReference type="HOGENOM" id="CLU_848443_0_0_1"/>
<dbReference type="InParanoid" id="Q54XG0"/>
<dbReference type="OMA" id="PCWDQSS"/>
<dbReference type="PRO" id="PR:Q54XG0"/>
<dbReference type="Proteomes" id="UP000002195">
    <property type="component" value="Chromosome 3"/>
</dbReference>
<dbReference type="GO" id="GO:0005730">
    <property type="term" value="C:nucleolus"/>
    <property type="evidence" value="ECO:0000318"/>
    <property type="project" value="GO_Central"/>
</dbReference>
<dbReference type="GO" id="GO:0003676">
    <property type="term" value="F:nucleic acid binding"/>
    <property type="evidence" value="ECO:0007669"/>
    <property type="project" value="InterPro"/>
</dbReference>
<dbReference type="InterPro" id="IPR000467">
    <property type="entry name" value="G_patch_dom"/>
</dbReference>
<dbReference type="InterPro" id="IPR050656">
    <property type="entry name" value="PINX1"/>
</dbReference>
<dbReference type="PANTHER" id="PTHR23149">
    <property type="entry name" value="G PATCH DOMAIN CONTAINING PROTEIN"/>
    <property type="match status" value="1"/>
</dbReference>
<dbReference type="PANTHER" id="PTHR23149:SF9">
    <property type="entry name" value="G PATCH DOMAIN-CONTAINING PROTEIN 4"/>
    <property type="match status" value="1"/>
</dbReference>
<dbReference type="Pfam" id="PF01585">
    <property type="entry name" value="G-patch"/>
    <property type="match status" value="1"/>
</dbReference>
<dbReference type="SMART" id="SM00443">
    <property type="entry name" value="G_patch"/>
    <property type="match status" value="1"/>
</dbReference>
<dbReference type="PROSITE" id="PS50174">
    <property type="entry name" value="G_PATCH"/>
    <property type="match status" value="1"/>
</dbReference>
<organism>
    <name type="scientific">Dictyostelium discoideum</name>
    <name type="common">Social amoeba</name>
    <dbReference type="NCBI Taxonomy" id="44689"/>
    <lineage>
        <taxon>Eukaryota</taxon>
        <taxon>Amoebozoa</taxon>
        <taxon>Evosea</taxon>
        <taxon>Eumycetozoa</taxon>
        <taxon>Dictyostelia</taxon>
        <taxon>Dictyosteliales</taxon>
        <taxon>Dictyosteliaceae</taxon>
        <taxon>Dictyostelium</taxon>
    </lineage>
</organism>
<evidence type="ECO:0000255" key="1">
    <source>
        <dbReference type="PROSITE-ProRule" id="PRU00092"/>
    </source>
</evidence>
<evidence type="ECO:0000256" key="2">
    <source>
        <dbReference type="SAM" id="MobiDB-lite"/>
    </source>
</evidence>
<name>Y5282_DICDI</name>
<feature type="chain" id="PRO_0000325780" description="Uncharacterized G-patch domain protein DDB_G0278987">
    <location>
        <begin position="1"/>
        <end position="328"/>
    </location>
</feature>
<feature type="domain" description="G-patch" evidence="1">
    <location>
        <begin position="10"/>
        <end position="55"/>
    </location>
</feature>
<feature type="region of interest" description="Disordered" evidence="2">
    <location>
        <begin position="97"/>
        <end position="291"/>
    </location>
</feature>
<feature type="compositionally biased region" description="Basic residues" evidence="2">
    <location>
        <begin position="101"/>
        <end position="110"/>
    </location>
</feature>
<feature type="compositionally biased region" description="Acidic residues" evidence="2">
    <location>
        <begin position="116"/>
        <end position="126"/>
    </location>
</feature>
<feature type="compositionally biased region" description="Low complexity" evidence="2">
    <location>
        <begin position="141"/>
        <end position="158"/>
    </location>
</feature>
<feature type="compositionally biased region" description="Low complexity" evidence="2">
    <location>
        <begin position="210"/>
        <end position="240"/>
    </location>
</feature>
<feature type="compositionally biased region" description="Basic residues" evidence="2">
    <location>
        <begin position="248"/>
        <end position="257"/>
    </location>
</feature>